<protein>
    <recommendedName>
        <fullName evidence="1">UDP-N-acetylmuramoylalanine--D-glutamate ligase</fullName>
        <ecNumber evidence="1">6.3.2.9</ecNumber>
    </recommendedName>
    <alternativeName>
        <fullName evidence="1">D-glutamic acid-adding enzyme</fullName>
    </alternativeName>
    <alternativeName>
        <fullName evidence="1">UDP-N-acetylmuramoyl-L-alanyl-D-glutamate synthetase</fullName>
    </alternativeName>
</protein>
<organism>
    <name type="scientific">Cytophaga hutchinsonii (strain ATCC 33406 / DSM 1761 / CIP 103989 / NBRC 15051 / NCIMB 9469 / D465)</name>
    <dbReference type="NCBI Taxonomy" id="269798"/>
    <lineage>
        <taxon>Bacteria</taxon>
        <taxon>Pseudomonadati</taxon>
        <taxon>Bacteroidota</taxon>
        <taxon>Cytophagia</taxon>
        <taxon>Cytophagales</taxon>
        <taxon>Cytophagaceae</taxon>
        <taxon>Cytophaga</taxon>
    </lineage>
</organism>
<name>MURD_CYTH3</name>
<sequence>MSQKIVILGSGESGVGAALLSKAKGYDTFVSDSSMITEAFIAELQQAGIAFEQGVHSEEKILSAQLIVKSPGIPEKAPIMKLIRSKAIEVISEIEFAYRHIHPGAKFIAITGSNGKTTTTLLTHHILAQLGYSVGLGGNIGTSLARQIIHEKKDVYVLELSSFQLDDMYTFKADVAVLLNITPDHLDRYEYKFENYTASKFRIFQNLTPADYYITYSEDSVIESYKKDHPVDARYVPVSLKQLYSAGAYSDEKTIQIHALDDTVVTCNTEEFPLQGKHNYINIMAALNAAVSIGADIHKSIASIKSFRNAPHRLEFVGSIYGVKFVNDSKATNVDSVWYALDSMKTPVVLIVGGVDKGNDYSQIEALVKEKVHTVVALGKDNSKVLSGFASMVSEIKEAHSMVEAIRIAHDSAKKGDTVLLSPACASFDLFKNYEDRGTQFRNLVIELAG</sequence>
<feature type="chain" id="PRO_0000257183" description="UDP-N-acetylmuramoylalanine--D-glutamate ligase">
    <location>
        <begin position="1"/>
        <end position="450"/>
    </location>
</feature>
<feature type="binding site" evidence="1">
    <location>
        <begin position="112"/>
        <end position="118"/>
    </location>
    <ligand>
        <name>ATP</name>
        <dbReference type="ChEBI" id="CHEBI:30616"/>
    </ligand>
</feature>
<proteinExistence type="inferred from homology"/>
<dbReference type="EC" id="6.3.2.9" evidence="1"/>
<dbReference type="EMBL" id="CP000383">
    <property type="protein sequence ID" value="ABG59991.1"/>
    <property type="molecule type" value="Genomic_DNA"/>
</dbReference>
<dbReference type="RefSeq" id="WP_011586101.1">
    <property type="nucleotide sequence ID" value="NC_008255.1"/>
</dbReference>
<dbReference type="SMR" id="Q11RH3"/>
<dbReference type="STRING" id="269798.CHU_2741"/>
<dbReference type="KEGG" id="chu:CHU_2741"/>
<dbReference type="eggNOG" id="COG0771">
    <property type="taxonomic scope" value="Bacteria"/>
</dbReference>
<dbReference type="HOGENOM" id="CLU_032540_0_0_10"/>
<dbReference type="OrthoDB" id="9809796at2"/>
<dbReference type="UniPathway" id="UPA00219"/>
<dbReference type="Proteomes" id="UP000001822">
    <property type="component" value="Chromosome"/>
</dbReference>
<dbReference type="GO" id="GO:0005737">
    <property type="term" value="C:cytoplasm"/>
    <property type="evidence" value="ECO:0007669"/>
    <property type="project" value="UniProtKB-SubCell"/>
</dbReference>
<dbReference type="GO" id="GO:0005524">
    <property type="term" value="F:ATP binding"/>
    <property type="evidence" value="ECO:0007669"/>
    <property type="project" value="UniProtKB-UniRule"/>
</dbReference>
<dbReference type="GO" id="GO:0008764">
    <property type="term" value="F:UDP-N-acetylmuramoylalanine-D-glutamate ligase activity"/>
    <property type="evidence" value="ECO:0007669"/>
    <property type="project" value="UniProtKB-UniRule"/>
</dbReference>
<dbReference type="GO" id="GO:0051301">
    <property type="term" value="P:cell division"/>
    <property type="evidence" value="ECO:0007669"/>
    <property type="project" value="UniProtKB-KW"/>
</dbReference>
<dbReference type="GO" id="GO:0071555">
    <property type="term" value="P:cell wall organization"/>
    <property type="evidence" value="ECO:0007669"/>
    <property type="project" value="UniProtKB-KW"/>
</dbReference>
<dbReference type="GO" id="GO:0009252">
    <property type="term" value="P:peptidoglycan biosynthetic process"/>
    <property type="evidence" value="ECO:0007669"/>
    <property type="project" value="UniProtKB-UniRule"/>
</dbReference>
<dbReference type="GO" id="GO:0008360">
    <property type="term" value="P:regulation of cell shape"/>
    <property type="evidence" value="ECO:0007669"/>
    <property type="project" value="UniProtKB-KW"/>
</dbReference>
<dbReference type="Gene3D" id="3.90.190.20">
    <property type="entry name" value="Mur ligase, C-terminal domain"/>
    <property type="match status" value="1"/>
</dbReference>
<dbReference type="Gene3D" id="3.40.1190.10">
    <property type="entry name" value="Mur-like, catalytic domain"/>
    <property type="match status" value="1"/>
</dbReference>
<dbReference type="Gene3D" id="3.40.50.720">
    <property type="entry name" value="NAD(P)-binding Rossmann-like Domain"/>
    <property type="match status" value="1"/>
</dbReference>
<dbReference type="HAMAP" id="MF_00639">
    <property type="entry name" value="MurD"/>
    <property type="match status" value="1"/>
</dbReference>
<dbReference type="InterPro" id="IPR036565">
    <property type="entry name" value="Mur-like_cat_sf"/>
</dbReference>
<dbReference type="InterPro" id="IPR004101">
    <property type="entry name" value="Mur_ligase_C"/>
</dbReference>
<dbReference type="InterPro" id="IPR036615">
    <property type="entry name" value="Mur_ligase_C_dom_sf"/>
</dbReference>
<dbReference type="InterPro" id="IPR013221">
    <property type="entry name" value="Mur_ligase_cen"/>
</dbReference>
<dbReference type="InterPro" id="IPR005762">
    <property type="entry name" value="MurD"/>
</dbReference>
<dbReference type="NCBIfam" id="TIGR01087">
    <property type="entry name" value="murD"/>
    <property type="match status" value="1"/>
</dbReference>
<dbReference type="PANTHER" id="PTHR43692">
    <property type="entry name" value="UDP-N-ACETYLMURAMOYLALANINE--D-GLUTAMATE LIGASE"/>
    <property type="match status" value="1"/>
</dbReference>
<dbReference type="PANTHER" id="PTHR43692:SF1">
    <property type="entry name" value="UDP-N-ACETYLMURAMOYLALANINE--D-GLUTAMATE LIGASE"/>
    <property type="match status" value="1"/>
</dbReference>
<dbReference type="Pfam" id="PF02875">
    <property type="entry name" value="Mur_ligase_C"/>
    <property type="match status" value="1"/>
</dbReference>
<dbReference type="Pfam" id="PF08245">
    <property type="entry name" value="Mur_ligase_M"/>
    <property type="match status" value="1"/>
</dbReference>
<dbReference type="Pfam" id="PF21799">
    <property type="entry name" value="MurD-like_N"/>
    <property type="match status" value="1"/>
</dbReference>
<dbReference type="SUPFAM" id="SSF51984">
    <property type="entry name" value="MurCD N-terminal domain"/>
    <property type="match status" value="1"/>
</dbReference>
<dbReference type="SUPFAM" id="SSF53623">
    <property type="entry name" value="MurD-like peptide ligases, catalytic domain"/>
    <property type="match status" value="1"/>
</dbReference>
<dbReference type="SUPFAM" id="SSF53244">
    <property type="entry name" value="MurD-like peptide ligases, peptide-binding domain"/>
    <property type="match status" value="1"/>
</dbReference>
<comment type="function">
    <text evidence="1">Cell wall formation. Catalyzes the addition of glutamate to the nucleotide precursor UDP-N-acetylmuramoyl-L-alanine (UMA).</text>
</comment>
<comment type="catalytic activity">
    <reaction evidence="1">
        <text>UDP-N-acetyl-alpha-D-muramoyl-L-alanine + D-glutamate + ATP = UDP-N-acetyl-alpha-D-muramoyl-L-alanyl-D-glutamate + ADP + phosphate + H(+)</text>
        <dbReference type="Rhea" id="RHEA:16429"/>
        <dbReference type="ChEBI" id="CHEBI:15378"/>
        <dbReference type="ChEBI" id="CHEBI:29986"/>
        <dbReference type="ChEBI" id="CHEBI:30616"/>
        <dbReference type="ChEBI" id="CHEBI:43474"/>
        <dbReference type="ChEBI" id="CHEBI:83898"/>
        <dbReference type="ChEBI" id="CHEBI:83900"/>
        <dbReference type="ChEBI" id="CHEBI:456216"/>
        <dbReference type="EC" id="6.3.2.9"/>
    </reaction>
</comment>
<comment type="pathway">
    <text evidence="1">Cell wall biogenesis; peptidoglycan biosynthesis.</text>
</comment>
<comment type="subcellular location">
    <subcellularLocation>
        <location evidence="1">Cytoplasm</location>
    </subcellularLocation>
</comment>
<comment type="similarity">
    <text evidence="1">Belongs to the MurCDEF family.</text>
</comment>
<keyword id="KW-0067">ATP-binding</keyword>
<keyword id="KW-0131">Cell cycle</keyword>
<keyword id="KW-0132">Cell division</keyword>
<keyword id="KW-0133">Cell shape</keyword>
<keyword id="KW-0961">Cell wall biogenesis/degradation</keyword>
<keyword id="KW-0963">Cytoplasm</keyword>
<keyword id="KW-0436">Ligase</keyword>
<keyword id="KW-0547">Nucleotide-binding</keyword>
<keyword id="KW-0573">Peptidoglycan synthesis</keyword>
<keyword id="KW-1185">Reference proteome</keyword>
<reference key="1">
    <citation type="journal article" date="2007" name="Appl. Environ. Microbiol.">
        <title>Genome sequence of the cellulolytic gliding bacterium Cytophaga hutchinsonii.</title>
        <authorList>
            <person name="Xie G."/>
            <person name="Bruce D.C."/>
            <person name="Challacombe J.F."/>
            <person name="Chertkov O."/>
            <person name="Detter J.C."/>
            <person name="Gilna P."/>
            <person name="Han C.S."/>
            <person name="Lucas S."/>
            <person name="Misra M."/>
            <person name="Myers G.L."/>
            <person name="Richardson P."/>
            <person name="Tapia R."/>
            <person name="Thayer N."/>
            <person name="Thompson L.S."/>
            <person name="Brettin T.S."/>
            <person name="Henrissat B."/>
            <person name="Wilson D.B."/>
            <person name="McBride M.J."/>
        </authorList>
    </citation>
    <scope>NUCLEOTIDE SEQUENCE [LARGE SCALE GENOMIC DNA]</scope>
    <source>
        <strain>ATCC 33406 / DSM 1761 / JCM 20678 / CIP 103989 / IAM 12607 / NBRC 15051 / NCIMB 9469 / D465</strain>
    </source>
</reference>
<accession>Q11RH3</accession>
<gene>
    <name evidence="1" type="primary">murD</name>
    <name type="ordered locus">CHU_2741</name>
</gene>
<evidence type="ECO:0000255" key="1">
    <source>
        <dbReference type="HAMAP-Rule" id="MF_00639"/>
    </source>
</evidence>